<comment type="function">
    <text evidence="2">Component of the acetyl coenzyme A carboxylase (ACC) complex. Biotin carboxylase (BC) catalyzes the carboxylation of biotin on its carrier protein (BCCP) and then the CO(2) group is transferred by the transcarboxylase to acetyl-CoA to form malonyl-CoA.</text>
</comment>
<comment type="catalytic activity">
    <reaction evidence="2">
        <text>N(6)-carboxybiotinyl-L-lysyl-[protein] + acetyl-CoA = N(6)-biotinyl-L-lysyl-[protein] + malonyl-CoA</text>
        <dbReference type="Rhea" id="RHEA:54728"/>
        <dbReference type="Rhea" id="RHEA-COMP:10505"/>
        <dbReference type="Rhea" id="RHEA-COMP:10506"/>
        <dbReference type="ChEBI" id="CHEBI:57288"/>
        <dbReference type="ChEBI" id="CHEBI:57384"/>
        <dbReference type="ChEBI" id="CHEBI:83144"/>
        <dbReference type="ChEBI" id="CHEBI:83145"/>
        <dbReference type="EC" id="2.1.3.15"/>
    </reaction>
</comment>
<comment type="cofactor">
    <cofactor evidence="2">
        <name>Zn(2+)</name>
        <dbReference type="ChEBI" id="CHEBI:29105"/>
    </cofactor>
    <text evidence="2">Binds 1 zinc ion per subunit.</text>
</comment>
<comment type="pathway">
    <text evidence="2">Lipid metabolism; malonyl-CoA biosynthesis; malonyl-CoA from acetyl-CoA: step 1/1.</text>
</comment>
<comment type="subunit">
    <text evidence="1">Acetyl-CoA carboxylase is a heterohexamer composed of biotin carboxyl carrier protein, biotin carboxylase and 2 subunits each of ACCase subunit alpha and ACCase plastid-coded subunit beta (accD).</text>
</comment>
<comment type="subcellular location">
    <subcellularLocation>
        <location evidence="2">Plastid</location>
        <location evidence="2">Chloroplast stroma</location>
    </subcellularLocation>
</comment>
<comment type="similarity">
    <text evidence="2">Belongs to the AccD/PCCB family.</text>
</comment>
<comment type="sequence caution" evidence="4">
    <conflict type="erroneous initiation">
        <sequence resource="EMBL-CDS" id="AAT98518"/>
    </conflict>
    <text>Extended N-terminus.</text>
</comment>
<accession>Q68RZ7</accession>
<protein>
    <recommendedName>
        <fullName evidence="2">Acetyl-coenzyme A carboxylase carboxyl transferase subunit beta, chloroplastic</fullName>
        <shortName evidence="2">ACCase subunit beta</shortName>
        <shortName evidence="2">Acetyl-CoA carboxylase carboxyltransferase subunit beta</shortName>
        <ecNumber evidence="2">2.1.3.15</ecNumber>
    </recommendedName>
</protein>
<geneLocation type="chloroplast"/>
<name>ACCD_PANGI</name>
<organism>
    <name type="scientific">Panax ginseng</name>
    <name type="common">Korean ginseng</name>
    <dbReference type="NCBI Taxonomy" id="4054"/>
    <lineage>
        <taxon>Eukaryota</taxon>
        <taxon>Viridiplantae</taxon>
        <taxon>Streptophyta</taxon>
        <taxon>Embryophyta</taxon>
        <taxon>Tracheophyta</taxon>
        <taxon>Spermatophyta</taxon>
        <taxon>Magnoliopsida</taxon>
        <taxon>eudicotyledons</taxon>
        <taxon>Gunneridae</taxon>
        <taxon>Pentapetalae</taxon>
        <taxon>asterids</taxon>
        <taxon>campanulids</taxon>
        <taxon>Apiales</taxon>
        <taxon>Araliaceae</taxon>
        <taxon>Panax</taxon>
    </lineage>
</organism>
<evidence type="ECO:0000250" key="1"/>
<evidence type="ECO:0000255" key="2">
    <source>
        <dbReference type="HAMAP-Rule" id="MF_01395"/>
    </source>
</evidence>
<evidence type="ECO:0000255" key="3">
    <source>
        <dbReference type="PROSITE-ProRule" id="PRU01136"/>
    </source>
</evidence>
<evidence type="ECO:0000305" key="4"/>
<dbReference type="EC" id="2.1.3.15" evidence="2"/>
<dbReference type="EMBL" id="AY582139">
    <property type="protein sequence ID" value="AAT98518.1"/>
    <property type="status" value="ALT_INIT"/>
    <property type="molecule type" value="Genomic_DNA"/>
</dbReference>
<dbReference type="RefSeq" id="YP_086975.1">
    <property type="nucleotide sequence ID" value="NC_006290.1"/>
</dbReference>
<dbReference type="SMR" id="Q68RZ7"/>
<dbReference type="GeneID" id="3021461"/>
<dbReference type="UniPathway" id="UPA00655">
    <property type="reaction ID" value="UER00711"/>
</dbReference>
<dbReference type="GO" id="GO:0009317">
    <property type="term" value="C:acetyl-CoA carboxylase complex"/>
    <property type="evidence" value="ECO:0007669"/>
    <property type="project" value="InterPro"/>
</dbReference>
<dbReference type="GO" id="GO:0009570">
    <property type="term" value="C:chloroplast stroma"/>
    <property type="evidence" value="ECO:0007669"/>
    <property type="project" value="UniProtKB-SubCell"/>
</dbReference>
<dbReference type="GO" id="GO:0003989">
    <property type="term" value="F:acetyl-CoA carboxylase activity"/>
    <property type="evidence" value="ECO:0007669"/>
    <property type="project" value="InterPro"/>
</dbReference>
<dbReference type="GO" id="GO:0005524">
    <property type="term" value="F:ATP binding"/>
    <property type="evidence" value="ECO:0007669"/>
    <property type="project" value="UniProtKB-KW"/>
</dbReference>
<dbReference type="GO" id="GO:0016743">
    <property type="term" value="F:carboxyl- or carbamoyltransferase activity"/>
    <property type="evidence" value="ECO:0007669"/>
    <property type="project" value="UniProtKB-UniRule"/>
</dbReference>
<dbReference type="GO" id="GO:0008270">
    <property type="term" value="F:zinc ion binding"/>
    <property type="evidence" value="ECO:0007669"/>
    <property type="project" value="UniProtKB-UniRule"/>
</dbReference>
<dbReference type="GO" id="GO:0006633">
    <property type="term" value="P:fatty acid biosynthetic process"/>
    <property type="evidence" value="ECO:0007669"/>
    <property type="project" value="UniProtKB-KW"/>
</dbReference>
<dbReference type="GO" id="GO:2001295">
    <property type="term" value="P:malonyl-CoA biosynthetic process"/>
    <property type="evidence" value="ECO:0007669"/>
    <property type="project" value="UniProtKB-UniRule"/>
</dbReference>
<dbReference type="Gene3D" id="3.90.226.10">
    <property type="entry name" value="2-enoyl-CoA Hydratase, Chain A, domain 1"/>
    <property type="match status" value="1"/>
</dbReference>
<dbReference type="HAMAP" id="MF_01395">
    <property type="entry name" value="AcetylCoA_CT_beta"/>
    <property type="match status" value="1"/>
</dbReference>
<dbReference type="InterPro" id="IPR034733">
    <property type="entry name" value="AcCoA_carboxyl_beta"/>
</dbReference>
<dbReference type="InterPro" id="IPR000438">
    <property type="entry name" value="Acetyl_CoA_COase_Trfase_b_su"/>
</dbReference>
<dbReference type="InterPro" id="IPR029045">
    <property type="entry name" value="ClpP/crotonase-like_dom_sf"/>
</dbReference>
<dbReference type="InterPro" id="IPR011762">
    <property type="entry name" value="COA_CT_N"/>
</dbReference>
<dbReference type="NCBIfam" id="TIGR00515">
    <property type="entry name" value="accD"/>
    <property type="match status" value="1"/>
</dbReference>
<dbReference type="PANTHER" id="PTHR42995">
    <property type="entry name" value="ACETYL-COENZYME A CARBOXYLASE CARBOXYL TRANSFERASE SUBUNIT BETA, CHLOROPLASTIC"/>
    <property type="match status" value="1"/>
</dbReference>
<dbReference type="PANTHER" id="PTHR42995:SF5">
    <property type="entry name" value="ACETYL-COENZYME A CARBOXYLASE CARBOXYL TRANSFERASE SUBUNIT BETA, CHLOROPLASTIC"/>
    <property type="match status" value="1"/>
</dbReference>
<dbReference type="Pfam" id="PF01039">
    <property type="entry name" value="Carboxyl_trans"/>
    <property type="match status" value="1"/>
</dbReference>
<dbReference type="PRINTS" id="PR01070">
    <property type="entry name" value="ACCCTRFRASEB"/>
</dbReference>
<dbReference type="SUPFAM" id="SSF52096">
    <property type="entry name" value="ClpP/crotonase"/>
    <property type="match status" value="1"/>
</dbReference>
<dbReference type="PROSITE" id="PS50980">
    <property type="entry name" value="COA_CT_NTER"/>
    <property type="match status" value="1"/>
</dbReference>
<sequence length="487" mass="55185">MERWWFNSILFKKEFEHRCGLSKSTGSLGPIENTSESEDPNINDMKKNIHSWGGRDNSNYSNVDHLFGVKDIRNFISDETFLVRDSNGNSYSIYFDIENHIFEIDNGHSFQSELESSFYSYQNSSYRNNGSNSDDPHYDHYMYDTQYSWNNNINSCIDNYLQSQIFIETDIVSGSDNYSNSYIYSSICGEIAGSGIRTRTDGSDLTIRESSNDLDVTQKYRHLWVQCENCYGLNYKKSFKSKMNLCEQCGYHLKMSSSDRIELLIDPGTWDPMDEDMVSLDPIEFHSEEEPYKDRVDSYQRKTGLTEAVQTGIGQLNSIPVAIGVMDFQFMGGSMGSVVGEKITRLIEYATKKFLPLIIVCASGGARMQEGSLSLMQMAKISSALYDYQSNKKLFYVPILTSPTTGGVTASFGMLGDIIIAEPNAYIAFAGKRVIEQTLNKTVPEGSQAAEYLFQKGLFDLIVPRNPLKSVLSELFQLHAFFPLNQN</sequence>
<feature type="chain" id="PRO_0000359159" description="Acetyl-coenzyme A carboxylase carboxyl transferase subunit beta, chloroplastic">
    <location>
        <begin position="1"/>
        <end position="487"/>
    </location>
</feature>
<feature type="domain" description="CoA carboxyltransferase N-terminal" evidence="3">
    <location>
        <begin position="223"/>
        <end position="487"/>
    </location>
</feature>
<feature type="zinc finger region" description="C4-type" evidence="2">
    <location>
        <begin position="227"/>
        <end position="249"/>
    </location>
</feature>
<feature type="binding site" evidence="2">
    <location>
        <position position="227"/>
    </location>
    <ligand>
        <name>Zn(2+)</name>
        <dbReference type="ChEBI" id="CHEBI:29105"/>
    </ligand>
</feature>
<feature type="binding site" evidence="2">
    <location>
        <position position="230"/>
    </location>
    <ligand>
        <name>Zn(2+)</name>
        <dbReference type="ChEBI" id="CHEBI:29105"/>
    </ligand>
</feature>
<feature type="binding site" evidence="2">
    <location>
        <position position="246"/>
    </location>
    <ligand>
        <name>Zn(2+)</name>
        <dbReference type="ChEBI" id="CHEBI:29105"/>
    </ligand>
</feature>
<feature type="binding site" evidence="2">
    <location>
        <position position="249"/>
    </location>
    <ligand>
        <name>Zn(2+)</name>
        <dbReference type="ChEBI" id="CHEBI:29105"/>
    </ligand>
</feature>
<gene>
    <name evidence="2" type="primary">accD</name>
    <name type="ORF">PSC0594</name>
</gene>
<keyword id="KW-0067">ATP-binding</keyword>
<keyword id="KW-0150">Chloroplast</keyword>
<keyword id="KW-0275">Fatty acid biosynthesis</keyword>
<keyword id="KW-0276">Fatty acid metabolism</keyword>
<keyword id="KW-0444">Lipid biosynthesis</keyword>
<keyword id="KW-0443">Lipid metabolism</keyword>
<keyword id="KW-0479">Metal-binding</keyword>
<keyword id="KW-0547">Nucleotide-binding</keyword>
<keyword id="KW-0934">Plastid</keyword>
<keyword id="KW-0808">Transferase</keyword>
<keyword id="KW-0862">Zinc</keyword>
<keyword id="KW-0863">Zinc-finger</keyword>
<reference key="1">
    <citation type="journal article" date="2004" name="DNA Res.">
        <title>Complete chloroplast genome sequence from Korea ginseng (Panax schinseng Nees) and comparative analysis of sequence evolution among 17 vascular plants.</title>
        <authorList>
            <person name="Kim K.-J."/>
            <person name="Lee H.-L."/>
        </authorList>
    </citation>
    <scope>NUCLEOTIDE SEQUENCE [LARGE SCALE GENOMIC DNA]</scope>
</reference>
<proteinExistence type="inferred from homology"/>